<accession>P26942</accession>
<accession>Q45629</accession>
<feature type="chain" id="PRO_0000049893" description="Ribosomal processing cysteine protease Prp">
    <location>
        <begin position="1"/>
        <end position="112"/>
    </location>
</feature>
<feature type="active site" description="Proton donor" evidence="1">
    <location>
        <position position="22"/>
    </location>
</feature>
<feature type="active site" description="Nucleophile" evidence="1">
    <location>
        <position position="34"/>
    </location>
</feature>
<feature type="sequence conflict" description="In Ref. 1; CAA42109 and 4; CAA26491." evidence="3" ref="1 4">
    <original>D</original>
    <variation>G</variation>
    <location>
        <position position="76"/>
    </location>
</feature>
<comment type="function">
    <text evidence="1">An essential cysteine protease that cleaves the N-terminus from ribosomal protein bL27.</text>
</comment>
<comment type="subunit">
    <text evidence="1">Homodimer.</text>
</comment>
<comment type="similarity">
    <text evidence="3">Belongs to the Prp family.</text>
</comment>
<keyword id="KW-0378">Hydrolase</keyword>
<keyword id="KW-0645">Protease</keyword>
<keyword id="KW-1185">Reference proteome</keyword>
<keyword id="KW-0690">Ribosome biogenesis</keyword>
<keyword id="KW-0788">Thiol protease</keyword>
<proteinExistence type="inferred from homology"/>
<dbReference type="EC" id="3.4.22.-" evidence="1"/>
<dbReference type="EMBL" id="X59528">
    <property type="protein sequence ID" value="CAA42109.1"/>
    <property type="molecule type" value="Genomic_DNA"/>
</dbReference>
<dbReference type="EMBL" id="AL009126">
    <property type="protein sequence ID" value="CAB14755.2"/>
    <property type="molecule type" value="Genomic_DNA"/>
</dbReference>
<dbReference type="EMBL" id="X02656">
    <property type="protein sequence ID" value="CAA26491.1"/>
    <property type="molecule type" value="Genomic_DNA"/>
</dbReference>
<dbReference type="PIR" id="S18440">
    <property type="entry name" value="S18440"/>
</dbReference>
<dbReference type="RefSeq" id="NP_390673.2">
    <property type="nucleotide sequence ID" value="NC_000964.3"/>
</dbReference>
<dbReference type="RefSeq" id="WP_003229669.1">
    <property type="nucleotide sequence ID" value="NZ_OZ025638.1"/>
</dbReference>
<dbReference type="SMR" id="P26942"/>
<dbReference type="FunCoup" id="P26942">
    <property type="interactions" value="15"/>
</dbReference>
<dbReference type="STRING" id="224308.BSU27950"/>
<dbReference type="PaxDb" id="224308-BSU27950"/>
<dbReference type="EnsemblBacteria" id="CAB14755">
    <property type="protein sequence ID" value="CAB14755"/>
    <property type="gene ID" value="BSU_27950"/>
</dbReference>
<dbReference type="GeneID" id="937961"/>
<dbReference type="KEGG" id="bsu:BSU27950"/>
<dbReference type="PATRIC" id="fig|224308.179.peg.3037"/>
<dbReference type="eggNOG" id="COG2868">
    <property type="taxonomic scope" value="Bacteria"/>
</dbReference>
<dbReference type="InParanoid" id="P26942"/>
<dbReference type="OrthoDB" id="48998at2"/>
<dbReference type="PhylomeDB" id="P26942"/>
<dbReference type="BioCyc" id="BSUB:BSU27950-MONOMER"/>
<dbReference type="Proteomes" id="UP000001570">
    <property type="component" value="Chromosome"/>
</dbReference>
<dbReference type="GO" id="GO:0008234">
    <property type="term" value="F:cysteine-type peptidase activity"/>
    <property type="evidence" value="ECO:0007669"/>
    <property type="project" value="UniProtKB-KW"/>
</dbReference>
<dbReference type="GO" id="GO:0006508">
    <property type="term" value="P:proteolysis"/>
    <property type="evidence" value="ECO:0007669"/>
    <property type="project" value="UniProtKB-KW"/>
</dbReference>
<dbReference type="GO" id="GO:0042254">
    <property type="term" value="P:ribosome biogenesis"/>
    <property type="evidence" value="ECO:0007669"/>
    <property type="project" value="UniProtKB-KW"/>
</dbReference>
<dbReference type="CDD" id="cd16332">
    <property type="entry name" value="Prp-like"/>
    <property type="match status" value="1"/>
</dbReference>
<dbReference type="Gene3D" id="3.30.70.1490">
    <property type="entry name" value="Cysteine protease Prp"/>
    <property type="match status" value="1"/>
</dbReference>
<dbReference type="InterPro" id="IPR007422">
    <property type="entry name" value="Peptidase_Prp"/>
</dbReference>
<dbReference type="InterPro" id="IPR036764">
    <property type="entry name" value="Peptidase_Prp_sf"/>
</dbReference>
<dbReference type="NCBIfam" id="NF011126">
    <property type="entry name" value="PRK14553.1-6"/>
    <property type="match status" value="1"/>
</dbReference>
<dbReference type="PANTHER" id="PTHR39178">
    <property type="entry name" value="HYPOTHETICAL RIBOSOME-ASSOCIATED PROTEIN"/>
    <property type="match status" value="1"/>
</dbReference>
<dbReference type="PANTHER" id="PTHR39178:SF1">
    <property type="entry name" value="RIBOSOMAL-PROCESSING CYSTEINE PROTEASE PRP"/>
    <property type="match status" value="1"/>
</dbReference>
<dbReference type="Pfam" id="PF04327">
    <property type="entry name" value="Peptidase_Prp"/>
    <property type="match status" value="1"/>
</dbReference>
<dbReference type="SUPFAM" id="SSF118010">
    <property type="entry name" value="TM1457-like"/>
    <property type="match status" value="1"/>
</dbReference>
<gene>
    <name evidence="1" type="primary">prp</name>
    <name evidence="2" type="synonym">rppA</name>
    <name type="synonym">ysxB</name>
    <name type="ordered locus">BSU27950</name>
</gene>
<reference key="1">
    <citation type="journal article" date="1991" name="J. Mol. Biol.">
        <title>Sporulation operon spoIVF and the characterization of mutations that uncouple mother-cell from forespore gene expression in Bacillus subtilis.</title>
        <authorList>
            <person name="Cutting S.M."/>
            <person name="Roels S."/>
            <person name="Losick R."/>
        </authorList>
    </citation>
    <scope>NUCLEOTIDE SEQUENCE [GENOMIC DNA]</scope>
    <source>
        <strain>168</strain>
    </source>
</reference>
<reference key="2">
    <citation type="journal article" date="1997" name="Nature">
        <title>The complete genome sequence of the Gram-positive bacterium Bacillus subtilis.</title>
        <authorList>
            <person name="Kunst F."/>
            <person name="Ogasawara N."/>
            <person name="Moszer I."/>
            <person name="Albertini A.M."/>
            <person name="Alloni G."/>
            <person name="Azevedo V."/>
            <person name="Bertero M.G."/>
            <person name="Bessieres P."/>
            <person name="Bolotin A."/>
            <person name="Borchert S."/>
            <person name="Borriss R."/>
            <person name="Boursier L."/>
            <person name="Brans A."/>
            <person name="Braun M."/>
            <person name="Brignell S.C."/>
            <person name="Bron S."/>
            <person name="Brouillet S."/>
            <person name="Bruschi C.V."/>
            <person name="Caldwell B."/>
            <person name="Capuano V."/>
            <person name="Carter N.M."/>
            <person name="Choi S.-K."/>
            <person name="Codani J.-J."/>
            <person name="Connerton I.F."/>
            <person name="Cummings N.J."/>
            <person name="Daniel R.A."/>
            <person name="Denizot F."/>
            <person name="Devine K.M."/>
            <person name="Duesterhoeft A."/>
            <person name="Ehrlich S.D."/>
            <person name="Emmerson P.T."/>
            <person name="Entian K.-D."/>
            <person name="Errington J."/>
            <person name="Fabret C."/>
            <person name="Ferrari E."/>
            <person name="Foulger D."/>
            <person name="Fritz C."/>
            <person name="Fujita M."/>
            <person name="Fujita Y."/>
            <person name="Fuma S."/>
            <person name="Galizzi A."/>
            <person name="Galleron N."/>
            <person name="Ghim S.-Y."/>
            <person name="Glaser P."/>
            <person name="Goffeau A."/>
            <person name="Golightly E.J."/>
            <person name="Grandi G."/>
            <person name="Guiseppi G."/>
            <person name="Guy B.J."/>
            <person name="Haga K."/>
            <person name="Haiech J."/>
            <person name="Harwood C.R."/>
            <person name="Henaut A."/>
            <person name="Hilbert H."/>
            <person name="Holsappel S."/>
            <person name="Hosono S."/>
            <person name="Hullo M.-F."/>
            <person name="Itaya M."/>
            <person name="Jones L.-M."/>
            <person name="Joris B."/>
            <person name="Karamata D."/>
            <person name="Kasahara Y."/>
            <person name="Klaerr-Blanchard M."/>
            <person name="Klein C."/>
            <person name="Kobayashi Y."/>
            <person name="Koetter P."/>
            <person name="Koningstein G."/>
            <person name="Krogh S."/>
            <person name="Kumano M."/>
            <person name="Kurita K."/>
            <person name="Lapidus A."/>
            <person name="Lardinois S."/>
            <person name="Lauber J."/>
            <person name="Lazarevic V."/>
            <person name="Lee S.-M."/>
            <person name="Levine A."/>
            <person name="Liu H."/>
            <person name="Masuda S."/>
            <person name="Mauel C."/>
            <person name="Medigue C."/>
            <person name="Medina N."/>
            <person name="Mellado R.P."/>
            <person name="Mizuno M."/>
            <person name="Moestl D."/>
            <person name="Nakai S."/>
            <person name="Noback M."/>
            <person name="Noone D."/>
            <person name="O'Reilly M."/>
            <person name="Ogawa K."/>
            <person name="Ogiwara A."/>
            <person name="Oudega B."/>
            <person name="Park S.-H."/>
            <person name="Parro V."/>
            <person name="Pohl T.M."/>
            <person name="Portetelle D."/>
            <person name="Porwollik S."/>
            <person name="Prescott A.M."/>
            <person name="Presecan E."/>
            <person name="Pujic P."/>
            <person name="Purnelle B."/>
            <person name="Rapoport G."/>
            <person name="Rey M."/>
            <person name="Reynolds S."/>
            <person name="Rieger M."/>
            <person name="Rivolta C."/>
            <person name="Rocha E."/>
            <person name="Roche B."/>
            <person name="Rose M."/>
            <person name="Sadaie Y."/>
            <person name="Sato T."/>
            <person name="Scanlan E."/>
            <person name="Schleich S."/>
            <person name="Schroeter R."/>
            <person name="Scoffone F."/>
            <person name="Sekiguchi J."/>
            <person name="Sekowska A."/>
            <person name="Seror S.J."/>
            <person name="Serror P."/>
            <person name="Shin B.-S."/>
            <person name="Soldo B."/>
            <person name="Sorokin A."/>
            <person name="Tacconi E."/>
            <person name="Takagi T."/>
            <person name="Takahashi H."/>
            <person name="Takemaru K."/>
            <person name="Takeuchi M."/>
            <person name="Tamakoshi A."/>
            <person name="Tanaka T."/>
            <person name="Terpstra P."/>
            <person name="Tognoni A."/>
            <person name="Tosato V."/>
            <person name="Uchiyama S."/>
            <person name="Vandenbol M."/>
            <person name="Vannier F."/>
            <person name="Vassarotti A."/>
            <person name="Viari A."/>
            <person name="Wambutt R."/>
            <person name="Wedler E."/>
            <person name="Wedler H."/>
            <person name="Weitzenegger T."/>
            <person name="Winters P."/>
            <person name="Wipat A."/>
            <person name="Yamamoto H."/>
            <person name="Yamane K."/>
            <person name="Yasumoto K."/>
            <person name="Yata K."/>
            <person name="Yoshida K."/>
            <person name="Yoshikawa H.-F."/>
            <person name="Zumstein E."/>
            <person name="Yoshikawa H."/>
            <person name="Danchin A."/>
        </authorList>
    </citation>
    <scope>NUCLEOTIDE SEQUENCE [LARGE SCALE GENOMIC DNA]</scope>
    <source>
        <strain>168</strain>
    </source>
</reference>
<reference key="3">
    <citation type="journal article" date="2009" name="Microbiology">
        <title>From a consortium sequence to a unified sequence: the Bacillus subtilis 168 reference genome a decade later.</title>
        <authorList>
            <person name="Barbe V."/>
            <person name="Cruveiller S."/>
            <person name="Kunst F."/>
            <person name="Lenoble P."/>
            <person name="Meurice G."/>
            <person name="Sekowska A."/>
            <person name="Vallenet D."/>
            <person name="Wang T."/>
            <person name="Moszer I."/>
            <person name="Medigue C."/>
            <person name="Danchin A."/>
        </authorList>
    </citation>
    <scope>SEQUENCE REVISION TO 76</scope>
</reference>
<reference key="4">
    <citation type="journal article" date="1985" name="J. Bacteriol.">
        <title>Sequence analysis of the spo0B locus reveals a polycistronic transcription unit.</title>
        <authorList>
            <person name="Ferrari F.A."/>
            <person name="Trach K.A."/>
            <person name="Hoch J.A."/>
        </authorList>
    </citation>
    <scope>NUCLEOTIDE SEQUENCE [GENOMIC DNA] OF 73-112</scope>
    <source>
        <strain>168</strain>
    </source>
</reference>
<protein>
    <recommendedName>
        <fullName evidence="1 4">Ribosomal processing cysteine protease Prp</fullName>
        <shortName evidence="1">Prp</shortName>
        <ecNumber evidence="1">3.4.22.-</ecNumber>
    </recommendedName>
</protein>
<name>PRP_BACSU</name>
<organism>
    <name type="scientific">Bacillus subtilis (strain 168)</name>
    <dbReference type="NCBI Taxonomy" id="224308"/>
    <lineage>
        <taxon>Bacteria</taxon>
        <taxon>Bacillati</taxon>
        <taxon>Bacillota</taxon>
        <taxon>Bacilli</taxon>
        <taxon>Bacillales</taxon>
        <taxon>Bacillaceae</taxon>
        <taxon>Bacillus</taxon>
    </lineage>
</organism>
<evidence type="ECO:0000250" key="1">
    <source>
        <dbReference type="UniProtKB" id="Q2FXS9"/>
    </source>
</evidence>
<evidence type="ECO:0000303" key="2">
    <source>
    </source>
</evidence>
<evidence type="ECO:0000305" key="3"/>
<evidence type="ECO:0000312" key="4">
    <source>
        <dbReference type="EMBL" id="CAB14755.2"/>
    </source>
</evidence>
<sequence>MIQATIRRSHDKGILSFEMTGHANFAEHGQDLVCAGVTAVVFGAVNAVIVLAGFEPLLDIGEDGGYFYFEFPESLDPEARQKAQLLIEGMIVSLETIERDYKDNLRVTTNII</sequence>